<name>TRPF_ACAM1</name>
<evidence type="ECO:0000255" key="1">
    <source>
        <dbReference type="HAMAP-Rule" id="MF_00135"/>
    </source>
</evidence>
<comment type="catalytic activity">
    <reaction evidence="1">
        <text>N-(5-phospho-beta-D-ribosyl)anthranilate = 1-(2-carboxyphenylamino)-1-deoxy-D-ribulose 5-phosphate</text>
        <dbReference type="Rhea" id="RHEA:21540"/>
        <dbReference type="ChEBI" id="CHEBI:18277"/>
        <dbReference type="ChEBI" id="CHEBI:58613"/>
        <dbReference type="EC" id="5.3.1.24"/>
    </reaction>
</comment>
<comment type="pathway">
    <text evidence="1">Amino-acid biosynthesis; L-tryptophan biosynthesis; L-tryptophan from chorismate: step 3/5.</text>
</comment>
<comment type="similarity">
    <text evidence="1">Belongs to the TrpF family.</text>
</comment>
<organism>
    <name type="scientific">Acaryochloris marina (strain MBIC 11017)</name>
    <dbReference type="NCBI Taxonomy" id="329726"/>
    <lineage>
        <taxon>Bacteria</taxon>
        <taxon>Bacillati</taxon>
        <taxon>Cyanobacteriota</taxon>
        <taxon>Cyanophyceae</taxon>
        <taxon>Acaryochloridales</taxon>
        <taxon>Acaryochloridaceae</taxon>
        <taxon>Acaryochloris</taxon>
    </lineage>
</organism>
<sequence length="217" mass="23382">MRVKICGITQPDQGVAIATLGADALGFICVSQSPRYVTPQQIQVVTQALPTQTLKGEPLTRIGVFANAALDLIQQTVEVGQLTGVQLHGDESPEFCQQVKAKLPKVELIKAFRVRSAETLAQITPYEAIANTLLLDAYTPQALGGTGHTWDWTLLKTFTPKLPWFLAGGLTPDNVTPAITTLTPSGIDLSSGVEQSPGNKDLQKVKQLFQQVHTLVI</sequence>
<feature type="chain" id="PRO_1000076428" description="N-(5'-phosphoribosyl)anthranilate isomerase">
    <location>
        <begin position="1"/>
        <end position="217"/>
    </location>
</feature>
<protein>
    <recommendedName>
        <fullName evidence="1">N-(5'-phosphoribosyl)anthranilate isomerase</fullName>
        <shortName evidence="1">PRAI</shortName>
        <ecNumber evidence="1">5.3.1.24</ecNumber>
    </recommendedName>
</protein>
<keyword id="KW-0028">Amino-acid biosynthesis</keyword>
<keyword id="KW-0057">Aromatic amino acid biosynthesis</keyword>
<keyword id="KW-0413">Isomerase</keyword>
<keyword id="KW-1185">Reference proteome</keyword>
<keyword id="KW-0822">Tryptophan biosynthesis</keyword>
<gene>
    <name evidence="1" type="primary">trpF</name>
    <name type="ordered locus">AM1_1638</name>
</gene>
<proteinExistence type="inferred from homology"/>
<accession>B0CA72</accession>
<dbReference type="EC" id="5.3.1.24" evidence="1"/>
<dbReference type="EMBL" id="CP000828">
    <property type="protein sequence ID" value="ABW26659.1"/>
    <property type="molecule type" value="Genomic_DNA"/>
</dbReference>
<dbReference type="RefSeq" id="WP_012162179.1">
    <property type="nucleotide sequence ID" value="NC_009925.1"/>
</dbReference>
<dbReference type="SMR" id="B0CA72"/>
<dbReference type="STRING" id="329726.AM1_1638"/>
<dbReference type="KEGG" id="amr:AM1_1638"/>
<dbReference type="eggNOG" id="COG0135">
    <property type="taxonomic scope" value="Bacteria"/>
</dbReference>
<dbReference type="HOGENOM" id="CLU_076364_2_0_3"/>
<dbReference type="OrthoDB" id="9786954at2"/>
<dbReference type="UniPathway" id="UPA00035">
    <property type="reaction ID" value="UER00042"/>
</dbReference>
<dbReference type="Proteomes" id="UP000000268">
    <property type="component" value="Chromosome"/>
</dbReference>
<dbReference type="GO" id="GO:0004640">
    <property type="term" value="F:phosphoribosylanthranilate isomerase activity"/>
    <property type="evidence" value="ECO:0007669"/>
    <property type="project" value="UniProtKB-UniRule"/>
</dbReference>
<dbReference type="GO" id="GO:0000162">
    <property type="term" value="P:L-tryptophan biosynthetic process"/>
    <property type="evidence" value="ECO:0007669"/>
    <property type="project" value="UniProtKB-UniRule"/>
</dbReference>
<dbReference type="CDD" id="cd00405">
    <property type="entry name" value="PRAI"/>
    <property type="match status" value="1"/>
</dbReference>
<dbReference type="Gene3D" id="3.20.20.70">
    <property type="entry name" value="Aldolase class I"/>
    <property type="match status" value="1"/>
</dbReference>
<dbReference type="HAMAP" id="MF_00135">
    <property type="entry name" value="PRAI"/>
    <property type="match status" value="1"/>
</dbReference>
<dbReference type="InterPro" id="IPR013785">
    <property type="entry name" value="Aldolase_TIM"/>
</dbReference>
<dbReference type="InterPro" id="IPR001240">
    <property type="entry name" value="PRAI_dom"/>
</dbReference>
<dbReference type="InterPro" id="IPR011060">
    <property type="entry name" value="RibuloseP-bd_barrel"/>
</dbReference>
<dbReference type="InterPro" id="IPR044643">
    <property type="entry name" value="TrpF_fam"/>
</dbReference>
<dbReference type="NCBIfam" id="NF002298">
    <property type="entry name" value="PRK01222.1-4"/>
    <property type="match status" value="1"/>
</dbReference>
<dbReference type="PANTHER" id="PTHR42894">
    <property type="entry name" value="N-(5'-PHOSPHORIBOSYL)ANTHRANILATE ISOMERASE"/>
    <property type="match status" value="1"/>
</dbReference>
<dbReference type="PANTHER" id="PTHR42894:SF1">
    <property type="entry name" value="N-(5'-PHOSPHORIBOSYL)ANTHRANILATE ISOMERASE"/>
    <property type="match status" value="1"/>
</dbReference>
<dbReference type="Pfam" id="PF00697">
    <property type="entry name" value="PRAI"/>
    <property type="match status" value="1"/>
</dbReference>
<dbReference type="SUPFAM" id="SSF51366">
    <property type="entry name" value="Ribulose-phoshate binding barrel"/>
    <property type="match status" value="1"/>
</dbReference>
<reference key="1">
    <citation type="journal article" date="2008" name="Proc. Natl. Acad. Sci. U.S.A.">
        <title>Niche adaptation and genome expansion in the chlorophyll d-producing cyanobacterium Acaryochloris marina.</title>
        <authorList>
            <person name="Swingley W.D."/>
            <person name="Chen M."/>
            <person name="Cheung P.C."/>
            <person name="Conrad A.L."/>
            <person name="Dejesa L.C."/>
            <person name="Hao J."/>
            <person name="Honchak B.M."/>
            <person name="Karbach L.E."/>
            <person name="Kurdoglu A."/>
            <person name="Lahiri S."/>
            <person name="Mastrian S.D."/>
            <person name="Miyashita H."/>
            <person name="Page L."/>
            <person name="Ramakrishna P."/>
            <person name="Satoh S."/>
            <person name="Sattley W.M."/>
            <person name="Shimada Y."/>
            <person name="Taylor H.L."/>
            <person name="Tomo T."/>
            <person name="Tsuchiya T."/>
            <person name="Wang Z.T."/>
            <person name="Raymond J."/>
            <person name="Mimuro M."/>
            <person name="Blankenship R.E."/>
            <person name="Touchman J.W."/>
        </authorList>
    </citation>
    <scope>NUCLEOTIDE SEQUENCE [LARGE SCALE GENOMIC DNA]</scope>
    <source>
        <strain>MBIC 11017</strain>
    </source>
</reference>